<feature type="chain" id="PRO_0000174083" description="Pesticidal crystal protein Cry11Ba">
    <location>
        <begin position="1"/>
        <end position="724"/>
    </location>
</feature>
<feature type="strand" evidence="2">
    <location>
        <begin position="23"/>
        <end position="25"/>
    </location>
</feature>
<feature type="helix" evidence="2">
    <location>
        <begin position="30"/>
        <end position="32"/>
    </location>
</feature>
<feature type="helix" evidence="2">
    <location>
        <begin position="36"/>
        <end position="47"/>
    </location>
</feature>
<feature type="turn" evidence="2">
    <location>
        <begin position="51"/>
        <end position="53"/>
    </location>
</feature>
<feature type="helix" evidence="2">
    <location>
        <begin position="54"/>
        <end position="62"/>
    </location>
</feature>
<feature type="helix" evidence="2">
    <location>
        <begin position="64"/>
        <end position="66"/>
    </location>
</feature>
<feature type="helix" evidence="2">
    <location>
        <begin position="69"/>
        <end position="82"/>
    </location>
</feature>
<feature type="helix" evidence="2">
    <location>
        <begin position="88"/>
        <end position="112"/>
    </location>
</feature>
<feature type="strand" evidence="2">
    <location>
        <begin position="114"/>
        <end position="116"/>
    </location>
</feature>
<feature type="helix" evidence="2">
    <location>
        <begin position="119"/>
        <end position="136"/>
    </location>
</feature>
<feature type="helix" evidence="2">
    <location>
        <begin position="137"/>
        <end position="140"/>
    </location>
</feature>
<feature type="helix" evidence="2">
    <location>
        <begin position="146"/>
        <end position="170"/>
    </location>
</feature>
<feature type="helix" evidence="2">
    <location>
        <begin position="171"/>
        <end position="174"/>
    </location>
</feature>
<feature type="helix" evidence="2">
    <location>
        <begin position="178"/>
        <end position="213"/>
    </location>
</feature>
<feature type="helix" evidence="2">
    <location>
        <begin position="215"/>
        <end position="228"/>
    </location>
</feature>
<feature type="helix" evidence="2">
    <location>
        <begin position="230"/>
        <end position="238"/>
    </location>
</feature>
<feature type="strand" evidence="2">
    <location>
        <begin position="241"/>
        <end position="243"/>
    </location>
</feature>
<feature type="strand" evidence="2">
    <location>
        <begin position="252"/>
        <end position="258"/>
    </location>
</feature>
<feature type="helix" evidence="2">
    <location>
        <begin position="265"/>
        <end position="270"/>
    </location>
</feature>
<feature type="helix" evidence="2">
    <location>
        <begin position="272"/>
        <end position="277"/>
    </location>
</feature>
<feature type="strand" evidence="2">
    <location>
        <begin position="284"/>
        <end position="296"/>
    </location>
</feature>
<feature type="strand" evidence="2">
    <location>
        <begin position="302"/>
        <end position="314"/>
    </location>
</feature>
<feature type="strand" evidence="2">
    <location>
        <begin position="317"/>
        <end position="324"/>
    </location>
</feature>
<feature type="strand" evidence="2">
    <location>
        <begin position="343"/>
        <end position="347"/>
    </location>
</feature>
<feature type="strand" evidence="2">
    <location>
        <begin position="362"/>
        <end position="373"/>
    </location>
</feature>
<feature type="strand" evidence="2">
    <location>
        <begin position="377"/>
        <end position="379"/>
    </location>
</feature>
<feature type="strand" evidence="2">
    <location>
        <begin position="388"/>
        <end position="391"/>
    </location>
</feature>
<feature type="strand" evidence="2">
    <location>
        <begin position="395"/>
        <end position="404"/>
    </location>
</feature>
<feature type="strand" evidence="2">
    <location>
        <begin position="407"/>
        <end position="410"/>
    </location>
</feature>
<feature type="strand" evidence="2">
    <location>
        <begin position="414"/>
        <end position="416"/>
    </location>
</feature>
<feature type="strand" evidence="2">
    <location>
        <begin position="421"/>
        <end position="423"/>
    </location>
</feature>
<feature type="strand" evidence="2">
    <location>
        <begin position="428"/>
        <end position="434"/>
    </location>
</feature>
<feature type="strand" evidence="2">
    <location>
        <begin position="438"/>
        <end position="440"/>
    </location>
</feature>
<feature type="helix" evidence="2">
    <location>
        <begin position="446"/>
        <end position="448"/>
    </location>
</feature>
<feature type="strand" evidence="2">
    <location>
        <begin position="451"/>
        <end position="459"/>
    </location>
</feature>
<feature type="strand" evidence="2">
    <location>
        <begin position="465"/>
        <end position="472"/>
    </location>
</feature>
<feature type="helix" evidence="2">
    <location>
        <begin position="473"/>
        <end position="475"/>
    </location>
</feature>
<feature type="helix" evidence="2">
    <location>
        <begin position="476"/>
        <end position="481"/>
    </location>
</feature>
<feature type="strand" evidence="2">
    <location>
        <begin position="482"/>
        <end position="486"/>
    </location>
</feature>
<feature type="strand" evidence="2">
    <location>
        <begin position="491"/>
        <end position="496"/>
    </location>
</feature>
<feature type="strand" evidence="2">
    <location>
        <begin position="501"/>
        <end position="503"/>
    </location>
</feature>
<feature type="strand" evidence="2">
    <location>
        <begin position="505"/>
        <end position="510"/>
    </location>
</feature>
<feature type="helix" evidence="2">
    <location>
        <begin position="513"/>
        <end position="515"/>
    </location>
</feature>
<feature type="strand" evidence="2">
    <location>
        <begin position="516"/>
        <end position="518"/>
    </location>
</feature>
<feature type="strand" evidence="2">
    <location>
        <begin position="520"/>
        <end position="523"/>
    </location>
</feature>
<feature type="strand" evidence="2">
    <location>
        <begin position="526"/>
        <end position="528"/>
    </location>
</feature>
<feature type="strand" evidence="2">
    <location>
        <begin position="530"/>
        <end position="538"/>
    </location>
</feature>
<feature type="strand" evidence="2">
    <location>
        <begin position="548"/>
        <end position="555"/>
    </location>
</feature>
<feature type="strand" evidence="2">
    <location>
        <begin position="560"/>
        <end position="570"/>
    </location>
</feature>
<feature type="strand" evidence="2">
    <location>
        <begin position="573"/>
        <end position="582"/>
    </location>
</feature>
<feature type="strand" evidence="2">
    <location>
        <begin position="589"/>
        <end position="592"/>
    </location>
</feature>
<feature type="helix" evidence="2">
    <location>
        <begin position="598"/>
        <end position="601"/>
    </location>
</feature>
<feature type="strand" evidence="2">
    <location>
        <begin position="608"/>
        <end position="616"/>
    </location>
</feature>
<feature type="helix" evidence="2">
    <location>
        <begin position="621"/>
        <end position="623"/>
    </location>
</feature>
<feature type="strand" evidence="2">
    <location>
        <begin position="625"/>
        <end position="634"/>
    </location>
</feature>
<feature type="turn" evidence="2">
    <location>
        <begin position="635"/>
        <end position="637"/>
    </location>
</feature>
<feature type="strand" evidence="2">
    <location>
        <begin position="647"/>
        <end position="651"/>
    </location>
</feature>
<accession>Q45730</accession>
<gene>
    <name type="primary">cry11Ba</name>
    <name type="synonym">cry11B</name>
    <name type="synonym">cryXIB(a)</name>
</gene>
<evidence type="ECO:0000305" key="1"/>
<evidence type="ECO:0007829" key="2">
    <source>
        <dbReference type="PDB" id="7QYD"/>
    </source>
</evidence>
<proteinExistence type="evidence at protein level"/>
<organism>
    <name type="scientific">Bacillus thuringiensis subsp. jegathesan</name>
    <dbReference type="NCBI Taxonomy" id="56955"/>
    <lineage>
        <taxon>Bacteria</taxon>
        <taxon>Bacillati</taxon>
        <taxon>Bacillota</taxon>
        <taxon>Bacilli</taxon>
        <taxon>Bacillales</taxon>
        <taxon>Bacillaceae</taxon>
        <taxon>Bacillus</taxon>
        <taxon>Bacillus cereus group</taxon>
    </lineage>
</organism>
<comment type="function">
    <text>Promotes colloidosmotic lysis by binding to the midgut epithelial cells of mosquitos. Active on Aedes aegypti, Culex pipiens and Anopheles stephensi larvae.</text>
</comment>
<comment type="developmental stage">
    <text>The crystal protein is produced during sporulation and is accumulated both as an inclusion and as part of the spore coat.</text>
</comment>
<comment type="miscellaneous">
    <text>Toxic segment of the protein is located in the N-terminus.</text>
</comment>
<comment type="similarity">
    <text evidence="1">Belongs to the delta endotoxin family.</text>
</comment>
<reference key="1">
    <citation type="journal article" date="1995" name="Appl. Environ. Microbiol.">
        <title>Cloning and expression of a novel toxin gene from Bacillus thuringiensis subsp. jegathesan encoding a highly mosquitocidal protein.</title>
        <authorList>
            <person name="Delecluse A."/>
            <person name="Rosso M.-L."/>
            <person name="Ragni A."/>
        </authorList>
    </citation>
    <scope>NUCLEOTIDE SEQUENCE [GENOMIC DNA]</scope>
    <source>
        <strain>367</strain>
    </source>
</reference>
<dbReference type="EMBL" id="X86902">
    <property type="protein sequence ID" value="CAA60504.1"/>
    <property type="molecule type" value="Genomic_DNA"/>
</dbReference>
<dbReference type="RefSeq" id="WP_086403606.1">
    <property type="nucleotide sequence ID" value="NZ_MOOS01000026.1"/>
</dbReference>
<dbReference type="PDB" id="7QYD">
    <property type="method" value="X-ray"/>
    <property type="resolution" value="2.40 A"/>
    <property type="chains" value="A/B=1-724"/>
</dbReference>
<dbReference type="PDB" id="7R1E">
    <property type="method" value="X-ray"/>
    <property type="resolution" value="2.65 A"/>
    <property type="chains" value="A/B=1-724"/>
</dbReference>
<dbReference type="PDBsum" id="7QYD"/>
<dbReference type="PDBsum" id="7R1E"/>
<dbReference type="SMR" id="Q45730"/>
<dbReference type="GO" id="GO:0090729">
    <property type="term" value="F:toxin activity"/>
    <property type="evidence" value="ECO:0007669"/>
    <property type="project" value="UniProtKB-KW"/>
</dbReference>
<dbReference type="GO" id="GO:0030435">
    <property type="term" value="P:sporulation resulting in formation of a cellular spore"/>
    <property type="evidence" value="ECO:0007669"/>
    <property type="project" value="UniProtKB-KW"/>
</dbReference>
<dbReference type="GO" id="GO:0001907">
    <property type="term" value="P:symbiont-mediated killing of host cell"/>
    <property type="evidence" value="ECO:0007669"/>
    <property type="project" value="InterPro"/>
</dbReference>
<dbReference type="Gene3D" id="1.20.190.10">
    <property type="entry name" value="Pesticidal crystal protein, N-terminal domain"/>
    <property type="match status" value="1"/>
</dbReference>
<dbReference type="InterPro" id="IPR038979">
    <property type="entry name" value="Pest_crys"/>
</dbReference>
<dbReference type="InterPro" id="IPR005639">
    <property type="entry name" value="Pest_crys_dom_I"/>
</dbReference>
<dbReference type="InterPro" id="IPR036716">
    <property type="entry name" value="Pest_crys_N_sf"/>
</dbReference>
<dbReference type="PANTHER" id="PTHR37003">
    <property type="entry name" value="ENDOTOXIN_N DOMAIN-CONTAINING PROTEIN-RELATED"/>
    <property type="match status" value="1"/>
</dbReference>
<dbReference type="PANTHER" id="PTHR37003:SF2">
    <property type="entry name" value="PESTICIDAL CRYSTAL PROTEIN N-TERMINAL DOMAIN-CONTAINING PROTEIN"/>
    <property type="match status" value="1"/>
</dbReference>
<dbReference type="Pfam" id="PF03945">
    <property type="entry name" value="Endotoxin_N"/>
    <property type="match status" value="1"/>
</dbReference>
<dbReference type="SUPFAM" id="SSF56849">
    <property type="entry name" value="delta-Endotoxin (insectocide), N-terminal domain"/>
    <property type="match status" value="1"/>
</dbReference>
<name>C11BA_BACTJ</name>
<protein>
    <recommendedName>
        <fullName>Pesticidal crystal protein Cry11Ba</fullName>
    </recommendedName>
    <alternativeName>
        <fullName>81 kDa crystal protein</fullName>
    </alternativeName>
    <alternativeName>
        <fullName>Crystaline entomocidal protoxin</fullName>
    </alternativeName>
    <alternativeName>
        <fullName>Insecticidal delta-endotoxin CryXIB(a)</fullName>
    </alternativeName>
</protein>
<sequence length="724" mass="81344">MQNNNFNTTEINNMINFPMYNGRLEPSLAPALIAVAPIAKYLATALAKWAVKQGFAKLKSEIFPGNTPATMDKVRIEVQTLLDQRLQDDRVKILEGEYKGIIDVSKVFTDYVNQSKFETGTANRLFFDTSNQLISRLPQFEIAGYEGVSISLFTQMCTFHLGLLKDGILAGSDWGFAPADKDALICQFNRFVNEYNTRLMVLYSKEFGRLLAKNLNEALNFRNMCSLYVFPFSEAWSLLRYEGTKLENTLSLWNFVGESINNISPNDWKGALYKLLMGAPNQRLNNVKFNYSYFSDTQATIHRENIHGVLPTYNGGPTITGWIGNGRFSGLSFPCSNELEITKIKQEITYNDKGGNFNSIVPAATRNEILTATVPTSADPFFKTADINWKYFSPGLYSGWNIKFDDTVTLKSRVPSIIPSNILKYDDYYIRAVSACPKGVSLAYNHDFLTLTYNKLEYDAPTTQNIIVGFSPDNTKSFYRSNSHYLSTTDDAYVIPALQFSTVSDRSFLEDTPDQATDGSIKFTDTVLGNEAKYSIRLNTGFNTATRYRLIIRFKAPARLAAGIRVRSQNSGNNKLLGGIPVEGNSGWIDYITDSFTFDDLGITTSSTNAFFSIDSDGVNASQQWYLSKLILVKESSFTTQIPLKPYVIVRCPDTFFVSNNSSSTYEQGYNNNYNQNSSSMYDQGYNNSYNPNSGCTCNQDYNNSYNQNSGCTCNQGYNNNYPK</sequence>
<keyword id="KW-0002">3D-structure</keyword>
<keyword id="KW-0749">Sporulation</keyword>
<keyword id="KW-0800">Toxin</keyword>
<keyword id="KW-0843">Virulence</keyword>